<organism>
    <name type="scientific">Macaca fascicularis</name>
    <name type="common">Crab-eating macaque</name>
    <name type="synonym">Cynomolgus monkey</name>
    <dbReference type="NCBI Taxonomy" id="9541"/>
    <lineage>
        <taxon>Eukaryota</taxon>
        <taxon>Metazoa</taxon>
        <taxon>Chordata</taxon>
        <taxon>Craniata</taxon>
        <taxon>Vertebrata</taxon>
        <taxon>Euteleostomi</taxon>
        <taxon>Mammalia</taxon>
        <taxon>Eutheria</taxon>
        <taxon>Euarchontoglires</taxon>
        <taxon>Primates</taxon>
        <taxon>Haplorrhini</taxon>
        <taxon>Catarrhini</taxon>
        <taxon>Cercopithecidae</taxon>
        <taxon>Cercopithecinae</taxon>
        <taxon>Macaca</taxon>
    </lineage>
</organism>
<evidence type="ECO:0000250" key="1"/>
<evidence type="ECO:0000250" key="2">
    <source>
        <dbReference type="UniProtKB" id="P23254"/>
    </source>
</evidence>
<evidence type="ECO:0000250" key="3">
    <source>
        <dbReference type="UniProtKB" id="P27302"/>
    </source>
</evidence>
<evidence type="ECO:0000250" key="4">
    <source>
        <dbReference type="UniProtKB" id="P51854"/>
    </source>
</evidence>
<evidence type="ECO:0000305" key="5"/>
<feature type="chain" id="PRO_0000285198" description="Transketolase-like protein 1">
    <location>
        <begin position="1"/>
        <end position="596"/>
    </location>
</feature>
<feature type="active site" description="Proton donor" evidence="3">
    <location>
        <position position="340"/>
    </location>
</feature>
<feature type="binding site" evidence="3">
    <location>
        <position position="46"/>
    </location>
    <ligand>
        <name>substrate</name>
    </ligand>
</feature>
<feature type="binding site" evidence="1">
    <location>
        <position position="49"/>
    </location>
    <ligand>
        <name>thiamine diphosphate</name>
        <dbReference type="ChEBI" id="CHEBI:58937"/>
    </ligand>
</feature>
<feature type="binding site" evidence="2">
    <location>
        <begin position="94"/>
        <end position="96"/>
    </location>
    <ligand>
        <name>thiamine diphosphate</name>
        <dbReference type="ChEBI" id="CHEBI:58937"/>
    </ligand>
</feature>
<feature type="binding site" evidence="3">
    <location>
        <position position="126"/>
    </location>
    <ligand>
        <name>Mg(2+)</name>
        <dbReference type="ChEBI" id="CHEBI:18420"/>
    </ligand>
</feature>
<feature type="binding site" evidence="2">
    <location>
        <position position="127"/>
    </location>
    <ligand>
        <name>thiamine diphosphate</name>
        <dbReference type="ChEBI" id="CHEBI:58937"/>
    </ligand>
</feature>
<feature type="binding site" evidence="3">
    <location>
        <position position="156"/>
    </location>
    <ligand>
        <name>Mg(2+)</name>
        <dbReference type="ChEBI" id="CHEBI:18420"/>
    </ligand>
</feature>
<feature type="binding site" evidence="2">
    <location>
        <position position="156"/>
    </location>
    <ligand>
        <name>thiamine diphosphate</name>
        <dbReference type="ChEBI" id="CHEBI:58937"/>
    </ligand>
</feature>
<feature type="binding site" evidence="3">
    <location>
        <position position="158"/>
    </location>
    <ligand>
        <name>Mg(2+)</name>
        <dbReference type="ChEBI" id="CHEBI:18420"/>
    </ligand>
</feature>
<feature type="binding site" evidence="1">
    <location>
        <position position="218"/>
    </location>
    <ligand>
        <name>thiamine diphosphate</name>
        <dbReference type="ChEBI" id="CHEBI:58937"/>
    </ligand>
</feature>
<feature type="binding site" evidence="3">
    <location>
        <position position="232"/>
    </location>
    <ligand>
        <name>substrate</name>
    </ligand>
</feature>
<feature type="binding site" evidence="2">
    <location>
        <position position="232"/>
    </location>
    <ligand>
        <name>thiamine diphosphate</name>
        <dbReference type="ChEBI" id="CHEBI:58937"/>
    </ligand>
</feature>
<feature type="binding site" evidence="3">
    <location>
        <position position="292"/>
    </location>
    <ligand>
        <name>substrate</name>
    </ligand>
</feature>
<feature type="binding site" evidence="3">
    <location>
        <position position="319"/>
    </location>
    <ligand>
        <name>substrate</name>
    </ligand>
</feature>
<feature type="binding site" evidence="2">
    <location>
        <position position="340"/>
    </location>
    <ligand>
        <name>thiamine diphosphate</name>
        <dbReference type="ChEBI" id="CHEBI:58937"/>
    </ligand>
</feature>
<feature type="binding site" evidence="2">
    <location>
        <position position="366"/>
    </location>
    <ligand>
        <name>thiamine diphosphate</name>
        <dbReference type="ChEBI" id="CHEBI:58937"/>
    </ligand>
</feature>
<feature type="binding site" evidence="3">
    <location>
        <position position="390"/>
    </location>
    <ligand>
        <name>substrate</name>
    </ligand>
</feature>
<feature type="binding site" evidence="3">
    <location>
        <position position="398"/>
    </location>
    <ligand>
        <name>substrate</name>
    </ligand>
</feature>
<feature type="binding site" evidence="1">
    <location>
        <position position="402"/>
    </location>
    <ligand>
        <name>thiamine diphosphate</name>
        <dbReference type="ChEBI" id="CHEBI:58937"/>
    </ligand>
</feature>
<feature type="binding site" evidence="3">
    <location>
        <position position="448"/>
    </location>
    <ligand>
        <name>substrate</name>
    </ligand>
</feature>
<feature type="site" description="Important for catalytic activity" evidence="2">
    <location>
        <position position="46"/>
    </location>
</feature>
<feature type="site" description="Important for catalytic activity" evidence="2">
    <location>
        <position position="232"/>
    </location>
</feature>
<accession>Q4R6M8</accession>
<name>TKTL1_MACFA</name>
<comment type="function">
    <text evidence="2">Catalyzes the transfer of a two-carbon ketol group from a ketose donor to an aldose acceptor, via a covalent intermediate with the cofactor thiamine pyrophosphate.</text>
</comment>
<comment type="catalytic activity">
    <reaction evidence="4">
        <text>D-sedoheptulose 7-phosphate + D-glyceraldehyde 3-phosphate = aldehydo-D-ribose 5-phosphate + D-xylulose 5-phosphate</text>
        <dbReference type="Rhea" id="RHEA:10508"/>
        <dbReference type="ChEBI" id="CHEBI:57483"/>
        <dbReference type="ChEBI" id="CHEBI:57737"/>
        <dbReference type="ChEBI" id="CHEBI:58273"/>
        <dbReference type="ChEBI" id="CHEBI:59776"/>
        <dbReference type="EC" id="2.2.1.1"/>
    </reaction>
    <physiologicalReaction direction="right-to-left" evidence="4">
        <dbReference type="Rhea" id="RHEA:10510"/>
    </physiologicalReaction>
</comment>
<comment type="cofactor">
    <cofactor evidence="2">
        <name>Mg(2+)</name>
        <dbReference type="ChEBI" id="CHEBI:18420"/>
    </cofactor>
    <cofactor evidence="2">
        <name>Ca(2+)</name>
        <dbReference type="ChEBI" id="CHEBI:29108"/>
    </cofactor>
    <cofactor evidence="2">
        <name>Mn(2+)</name>
        <dbReference type="ChEBI" id="CHEBI:29035"/>
    </cofactor>
    <cofactor evidence="2">
        <name>Co(2+)</name>
        <dbReference type="ChEBI" id="CHEBI:48828"/>
    </cofactor>
    <text evidence="2">Binds 1 Mg(2+) ion per subunit. Can also utilize other divalent metal cations, such as Ca(2+), Mn(2+) and Co(2+).</text>
</comment>
<comment type="cofactor">
    <cofactor evidence="2">
        <name>thiamine diphosphate</name>
        <dbReference type="ChEBI" id="CHEBI:58937"/>
    </cofactor>
    <text evidence="2">Binds 1 thiamine pyrophosphate per subunit.</text>
</comment>
<comment type="subunit">
    <text evidence="2">Homodimer.</text>
</comment>
<comment type="subcellular location">
    <subcellularLocation>
        <location evidence="4">Cytoplasm</location>
    </subcellularLocation>
</comment>
<comment type="similarity">
    <text evidence="5">Belongs to the transketolase family.</text>
</comment>
<protein>
    <recommendedName>
        <fullName>Transketolase-like protein 1</fullName>
        <ecNumber evidence="4">2.2.1.1</ecNumber>
    </recommendedName>
    <alternativeName>
        <fullName>Transketolase 2</fullName>
        <shortName>TK 2</shortName>
    </alternativeName>
</protein>
<proteinExistence type="evidence at transcript level"/>
<gene>
    <name type="primary">TKTL1</name>
    <name type="ORF">QtsA-17611</name>
</gene>
<sequence>MADAEASAELPEEARPDGGTLRVLRDMASRLRIHSIRATCSTSSGHPTSCSSSAEIMSVLFFYIMRYKQSDPENPDNDRFVLAKRLSFVDVATGWLGQGLGVACGMAYTGKYFDRASYRVFCLMSDGESSEGSVWEAMAFASYYSLDNLVAIFDVNRLGHSGALPAEHCIDIYQRRCEAFGWNTYVVDGRDVEALCQVFWQASQVKHKPTAVVAKTFKGRGTPSIEDAESWHGKPMPRERADAIIKLIESQIETSRNLDPQLPIEDSPEVNITDVRMTSPPDYRVGDKIATRKACGLALAKLGYANDRVIVLDGDTKYSTFSEIFNKEYPERFIECFMAEQNMVSVALGCASRGRTIAFASTFAAFLTRAFDQIRIGGLSESNINIIGSHCGVSVGEDGASQMALEDIAMFRTIPKCTIFYPTDAVSTEHAVSLAANAKGMCFIRTTRPETMVIYTPQERFEIGQAKVLRHCVSDKVTVIGAGITVYEALAAADELLKQDIFIRVIDLFTIKPLDVTTIISSAKATEGRIITVEDHYPQGGIGEAVCAAVSMDPDIQVHSLAVSGVPQSGKSEELLDMYGISARHIIVAVKCMLLN</sequence>
<reference key="1">
    <citation type="submission" date="2005-06" db="EMBL/GenBank/DDBJ databases">
        <title>DNA sequences of macaque genes expressed in brain or testis and its evolutionary implications.</title>
        <authorList>
            <consortium name="International consortium for macaque cDNA sequencing and analysis"/>
        </authorList>
    </citation>
    <scope>NUCLEOTIDE SEQUENCE [LARGE SCALE MRNA]</scope>
    <source>
        <tissue>Testis</tissue>
    </source>
</reference>
<keyword id="KW-0106">Calcium</keyword>
<keyword id="KW-0963">Cytoplasm</keyword>
<keyword id="KW-0460">Magnesium</keyword>
<keyword id="KW-0479">Metal-binding</keyword>
<keyword id="KW-1185">Reference proteome</keyword>
<keyword id="KW-0786">Thiamine pyrophosphate</keyword>
<keyword id="KW-0808">Transferase</keyword>
<dbReference type="EC" id="2.2.1.1" evidence="4"/>
<dbReference type="EMBL" id="AB169154">
    <property type="protein sequence ID" value="BAE01247.1"/>
    <property type="molecule type" value="mRNA"/>
</dbReference>
<dbReference type="RefSeq" id="NP_001270056.1">
    <property type="nucleotide sequence ID" value="NM_001283127.1"/>
</dbReference>
<dbReference type="RefSeq" id="XP_015299212.1">
    <property type="nucleotide sequence ID" value="XM_015443726.1"/>
</dbReference>
<dbReference type="SMR" id="Q4R6M8"/>
<dbReference type="STRING" id="9541.ENSMFAP00000015756"/>
<dbReference type="Ensembl" id="ENSMFAT00000066283.2">
    <property type="protein sequence ID" value="ENSMFAP00000015756.1"/>
    <property type="gene ID" value="ENSMFAG00000031072.2"/>
</dbReference>
<dbReference type="GeneID" id="101865992"/>
<dbReference type="KEGG" id="mcf:101865992"/>
<dbReference type="CTD" id="8277"/>
<dbReference type="VEuPathDB" id="HostDB:ENSMFAG00000031072"/>
<dbReference type="eggNOG" id="KOG0523">
    <property type="taxonomic scope" value="Eukaryota"/>
</dbReference>
<dbReference type="GeneTree" id="ENSGT00940000162426"/>
<dbReference type="OMA" id="EWTTGNL"/>
<dbReference type="Proteomes" id="UP000233100">
    <property type="component" value="Chromosome X"/>
</dbReference>
<dbReference type="Bgee" id="ENSMFAG00000031072">
    <property type="expression patterns" value="Expressed in heart"/>
</dbReference>
<dbReference type="GO" id="GO:0005829">
    <property type="term" value="C:cytosol"/>
    <property type="evidence" value="ECO:0007669"/>
    <property type="project" value="Ensembl"/>
</dbReference>
<dbReference type="GO" id="GO:0046872">
    <property type="term" value="F:metal ion binding"/>
    <property type="evidence" value="ECO:0007669"/>
    <property type="project" value="UniProtKB-KW"/>
</dbReference>
<dbReference type="GO" id="GO:0030976">
    <property type="term" value="F:thiamine pyrophosphate binding"/>
    <property type="evidence" value="ECO:0007669"/>
    <property type="project" value="TreeGrafter"/>
</dbReference>
<dbReference type="GO" id="GO:0004802">
    <property type="term" value="F:transketolase activity"/>
    <property type="evidence" value="ECO:0007669"/>
    <property type="project" value="UniProtKB-EC"/>
</dbReference>
<dbReference type="CDD" id="cd07033">
    <property type="entry name" value="TPP_PYR_DXS_TK_like"/>
    <property type="match status" value="1"/>
</dbReference>
<dbReference type="CDD" id="cd02012">
    <property type="entry name" value="TPP_TK"/>
    <property type="match status" value="1"/>
</dbReference>
<dbReference type="FunFam" id="3.40.50.970:FF:000028">
    <property type="entry name" value="Transketolase isoform 1"/>
    <property type="match status" value="1"/>
</dbReference>
<dbReference type="FunFam" id="3.40.50.970:FF:000033">
    <property type="entry name" value="Transketolase isoform 1"/>
    <property type="match status" value="1"/>
</dbReference>
<dbReference type="FunFam" id="3.40.50.920:FF:000008">
    <property type="entry name" value="transketolase isoform X2"/>
    <property type="match status" value="1"/>
</dbReference>
<dbReference type="Gene3D" id="3.40.50.920">
    <property type="match status" value="1"/>
</dbReference>
<dbReference type="Gene3D" id="3.40.50.970">
    <property type="match status" value="2"/>
</dbReference>
<dbReference type="InterPro" id="IPR029061">
    <property type="entry name" value="THDP-binding"/>
</dbReference>
<dbReference type="InterPro" id="IPR009014">
    <property type="entry name" value="Transketo_C/PFOR_II"/>
</dbReference>
<dbReference type="InterPro" id="IPR051424">
    <property type="entry name" value="Transketolase-like"/>
</dbReference>
<dbReference type="InterPro" id="IPR005475">
    <property type="entry name" value="Transketolase-like_Pyr-bd"/>
</dbReference>
<dbReference type="InterPro" id="IPR020826">
    <property type="entry name" value="Transketolase_BS"/>
</dbReference>
<dbReference type="InterPro" id="IPR033248">
    <property type="entry name" value="Transketolase_C"/>
</dbReference>
<dbReference type="InterPro" id="IPR005474">
    <property type="entry name" value="Transketolase_N"/>
</dbReference>
<dbReference type="NCBIfam" id="NF004559">
    <property type="entry name" value="PRK05899.2-5"/>
    <property type="match status" value="1"/>
</dbReference>
<dbReference type="PANTHER" id="PTHR43195">
    <property type="entry name" value="TRANSKETOLASE"/>
    <property type="match status" value="1"/>
</dbReference>
<dbReference type="PANTHER" id="PTHR43195:SF2">
    <property type="entry name" value="TRANSKETOLASE-LIKE PROTEIN 1"/>
    <property type="match status" value="1"/>
</dbReference>
<dbReference type="Pfam" id="PF02779">
    <property type="entry name" value="Transket_pyr"/>
    <property type="match status" value="1"/>
</dbReference>
<dbReference type="Pfam" id="PF02780">
    <property type="entry name" value="Transketolase_C"/>
    <property type="match status" value="1"/>
</dbReference>
<dbReference type="Pfam" id="PF00456">
    <property type="entry name" value="Transketolase_N"/>
    <property type="match status" value="2"/>
</dbReference>
<dbReference type="SMART" id="SM00861">
    <property type="entry name" value="Transket_pyr"/>
    <property type="match status" value="1"/>
</dbReference>
<dbReference type="SUPFAM" id="SSF52518">
    <property type="entry name" value="Thiamin diphosphate-binding fold (THDP-binding)"/>
    <property type="match status" value="2"/>
</dbReference>
<dbReference type="SUPFAM" id="SSF52922">
    <property type="entry name" value="TK C-terminal domain-like"/>
    <property type="match status" value="1"/>
</dbReference>
<dbReference type="PROSITE" id="PS00802">
    <property type="entry name" value="TRANSKETOLASE_2"/>
    <property type="match status" value="1"/>
</dbReference>